<dbReference type="EMBL" id="AF050674">
    <property type="protein sequence ID" value="AAC05674.1"/>
    <property type="molecule type" value="mRNA"/>
</dbReference>
<dbReference type="EMBL" id="AP004223">
    <property type="protein sequence ID" value="BAB90651.1"/>
    <property type="molecule type" value="Genomic_DNA"/>
</dbReference>
<dbReference type="EMBL" id="AP004672">
    <property type="protein sequence ID" value="BAB90834.1"/>
    <property type="molecule type" value="Genomic_DNA"/>
</dbReference>
<dbReference type="EMBL" id="AP008207">
    <property type="protein sequence ID" value="BAF07158.1"/>
    <property type="molecule type" value="Genomic_DNA"/>
</dbReference>
<dbReference type="EMBL" id="AP014957">
    <property type="protein sequence ID" value="BAS75968.1"/>
    <property type="molecule type" value="Genomic_DNA"/>
</dbReference>
<dbReference type="EMBL" id="CM000138">
    <property type="protein sequence ID" value="EEE55917.1"/>
    <property type="molecule type" value="Genomic_DNA"/>
</dbReference>
<dbReference type="EMBL" id="AK061690">
    <property type="protein sequence ID" value="BAG88058.1"/>
    <property type="molecule type" value="mRNA"/>
</dbReference>
<dbReference type="PIR" id="T02788">
    <property type="entry name" value="T02788"/>
</dbReference>
<dbReference type="RefSeq" id="XP_015625267.1">
    <property type="nucleotide sequence ID" value="XM_015769781.1"/>
</dbReference>
<dbReference type="SMR" id="O65037"/>
<dbReference type="FunCoup" id="O65037">
    <property type="interactions" value="810"/>
</dbReference>
<dbReference type="STRING" id="39947.O65037"/>
<dbReference type="PaxDb" id="39947-O65037"/>
<dbReference type="EnsemblPlants" id="Os01t0924000-01">
    <property type="protein sequence ID" value="Os01t0924000-01"/>
    <property type="gene ID" value="Os01g0924000"/>
</dbReference>
<dbReference type="Gramene" id="Os01t0924000-01">
    <property type="protein sequence ID" value="Os01t0924000-01"/>
    <property type="gene ID" value="Os01g0924000"/>
</dbReference>
<dbReference type="KEGG" id="dosa:Os01g0924000"/>
<dbReference type="eggNOG" id="KOG4600">
    <property type="taxonomic scope" value="Eukaryota"/>
</dbReference>
<dbReference type="HOGENOM" id="CLU_095424_0_0_1"/>
<dbReference type="InParanoid" id="O65037"/>
<dbReference type="OMA" id="REIQPEN"/>
<dbReference type="OrthoDB" id="1867012at2759"/>
<dbReference type="Proteomes" id="UP000000763">
    <property type="component" value="Chromosome 1"/>
</dbReference>
<dbReference type="Proteomes" id="UP000007752">
    <property type="component" value="Chromosome 1"/>
</dbReference>
<dbReference type="Proteomes" id="UP000059680">
    <property type="component" value="Chromosome 1"/>
</dbReference>
<dbReference type="ExpressionAtlas" id="O65037">
    <property type="expression patterns" value="baseline and differential"/>
</dbReference>
<dbReference type="GO" id="GO:0009507">
    <property type="term" value="C:chloroplast"/>
    <property type="evidence" value="ECO:0007669"/>
    <property type="project" value="UniProtKB-SubCell"/>
</dbReference>
<dbReference type="GO" id="GO:1990904">
    <property type="term" value="C:ribonucleoprotein complex"/>
    <property type="evidence" value="ECO:0007669"/>
    <property type="project" value="UniProtKB-KW"/>
</dbReference>
<dbReference type="GO" id="GO:0005840">
    <property type="term" value="C:ribosome"/>
    <property type="evidence" value="ECO:0007669"/>
    <property type="project" value="UniProtKB-KW"/>
</dbReference>
<dbReference type="GO" id="GO:0003735">
    <property type="term" value="F:structural constituent of ribosome"/>
    <property type="evidence" value="ECO:0000318"/>
    <property type="project" value="GO_Central"/>
</dbReference>
<dbReference type="GO" id="GO:0006412">
    <property type="term" value="P:translation"/>
    <property type="evidence" value="ECO:0007669"/>
    <property type="project" value="InterPro"/>
</dbReference>
<dbReference type="FunFam" id="2.40.50.100:FF:000051">
    <property type="entry name" value="50S ribosomal protein L27"/>
    <property type="match status" value="1"/>
</dbReference>
<dbReference type="Gene3D" id="2.40.50.100">
    <property type="match status" value="1"/>
</dbReference>
<dbReference type="HAMAP" id="MF_00539">
    <property type="entry name" value="Ribosomal_bL27"/>
    <property type="match status" value="1"/>
</dbReference>
<dbReference type="InterPro" id="IPR001684">
    <property type="entry name" value="Ribosomal_bL27"/>
</dbReference>
<dbReference type="InterPro" id="IPR018261">
    <property type="entry name" value="Ribosomal_bL27_CS"/>
</dbReference>
<dbReference type="NCBIfam" id="TIGR00062">
    <property type="entry name" value="L27"/>
    <property type="match status" value="1"/>
</dbReference>
<dbReference type="PANTHER" id="PTHR15893:SF0">
    <property type="entry name" value="LARGE RIBOSOMAL SUBUNIT PROTEIN BL27M"/>
    <property type="match status" value="1"/>
</dbReference>
<dbReference type="PANTHER" id="PTHR15893">
    <property type="entry name" value="RIBOSOMAL PROTEIN L27"/>
    <property type="match status" value="1"/>
</dbReference>
<dbReference type="Pfam" id="PF01016">
    <property type="entry name" value="Ribosomal_L27"/>
    <property type="match status" value="1"/>
</dbReference>
<dbReference type="PRINTS" id="PR00063">
    <property type="entry name" value="RIBOSOMALL27"/>
</dbReference>
<dbReference type="SUPFAM" id="SSF110324">
    <property type="entry name" value="Ribosomal L27 protein-like"/>
    <property type="match status" value="1"/>
</dbReference>
<dbReference type="PROSITE" id="PS00831">
    <property type="entry name" value="RIBOSOMAL_L27"/>
    <property type="match status" value="1"/>
</dbReference>
<sequence>MASMAFTLVGAFKGMSLSSPCHSSSSASFLRADRVSLSVGGGVGMGVPMTMPVRRLTIQMAHKKGAGSTKNGRDSPGQRLGVKIYGDQVAKPGAIIIRQRGTRVYPGNNVGMGKDHTLFSLIDGLVKFEKYGPDKKKVSVYPYEKQPENPNSYRARKREYFRMQRERKKARAEGIVEVQLVLAAADESPEVNADC</sequence>
<comment type="subunit">
    <text>Part of the 50S ribosomal subunit.</text>
</comment>
<comment type="subcellular location">
    <subcellularLocation>
        <location>Plastid</location>
        <location>Chloroplast</location>
    </subcellularLocation>
</comment>
<comment type="similarity">
    <text evidence="2">Belongs to the bacterial ribosomal protein bL27 family.</text>
</comment>
<accession>O65037</accession>
<accession>Q0JGH0</accession>
<accession>Q7EZE4</accession>
<keyword id="KW-0150">Chloroplast</keyword>
<keyword id="KW-0934">Plastid</keyword>
<keyword id="KW-1185">Reference proteome</keyword>
<keyword id="KW-0687">Ribonucleoprotein</keyword>
<keyword id="KW-0689">Ribosomal protein</keyword>
<keyword id="KW-0809">Transit peptide</keyword>
<gene>
    <name type="primary">RPL27</name>
    <name type="ordered locus">Os01g0924000</name>
    <name type="ordered locus">LOC_Os01g69950</name>
    <name type="ORF">B1033B05.2-1</name>
    <name evidence="3" type="ORF">OsJ_04596</name>
    <name type="ORF">P0592G05.26-1</name>
</gene>
<proteinExistence type="evidence at transcript level"/>
<evidence type="ECO:0000250" key="1"/>
<evidence type="ECO:0000305" key="2"/>
<evidence type="ECO:0000312" key="3">
    <source>
        <dbReference type="EMBL" id="EEE55917.1"/>
    </source>
</evidence>
<organism>
    <name type="scientific">Oryza sativa subsp. japonica</name>
    <name type="common">Rice</name>
    <dbReference type="NCBI Taxonomy" id="39947"/>
    <lineage>
        <taxon>Eukaryota</taxon>
        <taxon>Viridiplantae</taxon>
        <taxon>Streptophyta</taxon>
        <taxon>Embryophyta</taxon>
        <taxon>Tracheophyta</taxon>
        <taxon>Spermatophyta</taxon>
        <taxon>Magnoliopsida</taxon>
        <taxon>Liliopsida</taxon>
        <taxon>Poales</taxon>
        <taxon>Poaceae</taxon>
        <taxon>BOP clade</taxon>
        <taxon>Oryzoideae</taxon>
        <taxon>Oryzeae</taxon>
        <taxon>Oryzinae</taxon>
        <taxon>Oryza</taxon>
        <taxon>Oryza sativa</taxon>
    </lineage>
</organism>
<protein>
    <recommendedName>
        <fullName evidence="2">Large ribosomal subunit protein bL27c</fullName>
    </recommendedName>
    <alternativeName>
        <fullName>50S ribosomal protein L27, chloroplastic</fullName>
    </alternativeName>
    <alternativeName>
        <fullName>CL27</fullName>
    </alternativeName>
</protein>
<feature type="transit peptide" description="Chloroplast" evidence="1">
    <location>
        <begin position="1"/>
        <end position="60"/>
    </location>
</feature>
<feature type="chain" id="PRO_0000030494" description="Large ribosomal subunit protein bL27c">
    <location>
        <begin position="61"/>
        <end position="195"/>
    </location>
</feature>
<reference key="1">
    <citation type="submission" date="1998-02" db="EMBL/GenBank/DDBJ databases">
        <title>Molecular cloning and characterization of ribosomal DNA in rice.</title>
        <authorList>
            <person name="Yoon U.H."/>
            <person name="Hahn J.H."/>
            <person name="Yun C.-H."/>
            <person name="Eun M.Y."/>
        </authorList>
    </citation>
    <scope>NUCLEOTIDE SEQUENCE [MRNA]</scope>
    <source>
        <strain>cv. Ilpoombyeo</strain>
        <tissue>Seedling</tissue>
    </source>
</reference>
<reference key="2">
    <citation type="journal article" date="2002" name="Nature">
        <title>The genome sequence and structure of rice chromosome 1.</title>
        <authorList>
            <person name="Sasaki T."/>
            <person name="Matsumoto T."/>
            <person name="Yamamoto K."/>
            <person name="Sakata K."/>
            <person name="Baba T."/>
            <person name="Katayose Y."/>
            <person name="Wu J."/>
            <person name="Niimura Y."/>
            <person name="Cheng Z."/>
            <person name="Nagamura Y."/>
            <person name="Antonio B.A."/>
            <person name="Kanamori H."/>
            <person name="Hosokawa S."/>
            <person name="Masukawa M."/>
            <person name="Arikawa K."/>
            <person name="Chiden Y."/>
            <person name="Hayashi M."/>
            <person name="Okamoto M."/>
            <person name="Ando T."/>
            <person name="Aoki H."/>
            <person name="Arita K."/>
            <person name="Hamada M."/>
            <person name="Harada C."/>
            <person name="Hijishita S."/>
            <person name="Honda M."/>
            <person name="Ichikawa Y."/>
            <person name="Idonuma A."/>
            <person name="Iijima M."/>
            <person name="Ikeda M."/>
            <person name="Ikeno M."/>
            <person name="Ito S."/>
            <person name="Ito T."/>
            <person name="Ito Y."/>
            <person name="Ito Y."/>
            <person name="Iwabuchi A."/>
            <person name="Kamiya K."/>
            <person name="Karasawa W."/>
            <person name="Katagiri S."/>
            <person name="Kikuta A."/>
            <person name="Kobayashi N."/>
            <person name="Kono I."/>
            <person name="Machita K."/>
            <person name="Maehara T."/>
            <person name="Mizuno H."/>
            <person name="Mizubayashi T."/>
            <person name="Mukai Y."/>
            <person name="Nagasaki H."/>
            <person name="Nakashima M."/>
            <person name="Nakama Y."/>
            <person name="Nakamichi Y."/>
            <person name="Nakamura M."/>
            <person name="Namiki N."/>
            <person name="Negishi M."/>
            <person name="Ohta I."/>
            <person name="Ono N."/>
            <person name="Saji S."/>
            <person name="Sakai K."/>
            <person name="Shibata M."/>
            <person name="Shimokawa T."/>
            <person name="Shomura A."/>
            <person name="Song J."/>
            <person name="Takazaki Y."/>
            <person name="Terasawa K."/>
            <person name="Tsuji K."/>
            <person name="Waki K."/>
            <person name="Yamagata H."/>
            <person name="Yamane H."/>
            <person name="Yoshiki S."/>
            <person name="Yoshihara R."/>
            <person name="Yukawa K."/>
            <person name="Zhong H."/>
            <person name="Iwama H."/>
            <person name="Endo T."/>
            <person name="Ito H."/>
            <person name="Hahn J.H."/>
            <person name="Kim H.-I."/>
            <person name="Eun M.-Y."/>
            <person name="Yano M."/>
            <person name="Jiang J."/>
            <person name="Gojobori T."/>
        </authorList>
    </citation>
    <scope>NUCLEOTIDE SEQUENCE [LARGE SCALE GENOMIC DNA]</scope>
    <source>
        <strain>cv. Nipponbare</strain>
    </source>
</reference>
<reference key="3">
    <citation type="journal article" date="2005" name="Nature">
        <title>The map-based sequence of the rice genome.</title>
        <authorList>
            <consortium name="International rice genome sequencing project (IRGSP)"/>
        </authorList>
    </citation>
    <scope>NUCLEOTIDE SEQUENCE [LARGE SCALE GENOMIC DNA]</scope>
    <source>
        <strain>cv. Nipponbare</strain>
    </source>
</reference>
<reference key="4">
    <citation type="journal article" date="2008" name="Nucleic Acids Res.">
        <title>The rice annotation project database (RAP-DB): 2008 update.</title>
        <authorList>
            <consortium name="The rice annotation project (RAP)"/>
        </authorList>
    </citation>
    <scope>GENOME REANNOTATION</scope>
    <source>
        <strain>cv. Nipponbare</strain>
    </source>
</reference>
<reference key="5">
    <citation type="journal article" date="2013" name="Rice">
        <title>Improvement of the Oryza sativa Nipponbare reference genome using next generation sequence and optical map data.</title>
        <authorList>
            <person name="Kawahara Y."/>
            <person name="de la Bastide M."/>
            <person name="Hamilton J.P."/>
            <person name="Kanamori H."/>
            <person name="McCombie W.R."/>
            <person name="Ouyang S."/>
            <person name="Schwartz D.C."/>
            <person name="Tanaka T."/>
            <person name="Wu J."/>
            <person name="Zhou S."/>
            <person name="Childs K.L."/>
            <person name="Davidson R.M."/>
            <person name="Lin H."/>
            <person name="Quesada-Ocampo L."/>
            <person name="Vaillancourt B."/>
            <person name="Sakai H."/>
            <person name="Lee S.S."/>
            <person name="Kim J."/>
            <person name="Numa H."/>
            <person name="Itoh T."/>
            <person name="Buell C.R."/>
            <person name="Matsumoto T."/>
        </authorList>
    </citation>
    <scope>GENOME REANNOTATION</scope>
    <source>
        <strain>cv. Nipponbare</strain>
    </source>
</reference>
<reference key="6">
    <citation type="journal article" date="2005" name="PLoS Biol.">
        <title>The genomes of Oryza sativa: a history of duplications.</title>
        <authorList>
            <person name="Yu J."/>
            <person name="Wang J."/>
            <person name="Lin W."/>
            <person name="Li S."/>
            <person name="Li H."/>
            <person name="Zhou J."/>
            <person name="Ni P."/>
            <person name="Dong W."/>
            <person name="Hu S."/>
            <person name="Zeng C."/>
            <person name="Zhang J."/>
            <person name="Zhang Y."/>
            <person name="Li R."/>
            <person name="Xu Z."/>
            <person name="Li S."/>
            <person name="Li X."/>
            <person name="Zheng H."/>
            <person name="Cong L."/>
            <person name="Lin L."/>
            <person name="Yin J."/>
            <person name="Geng J."/>
            <person name="Li G."/>
            <person name="Shi J."/>
            <person name="Liu J."/>
            <person name="Lv H."/>
            <person name="Li J."/>
            <person name="Wang J."/>
            <person name="Deng Y."/>
            <person name="Ran L."/>
            <person name="Shi X."/>
            <person name="Wang X."/>
            <person name="Wu Q."/>
            <person name="Li C."/>
            <person name="Ren X."/>
            <person name="Wang J."/>
            <person name="Wang X."/>
            <person name="Li D."/>
            <person name="Liu D."/>
            <person name="Zhang X."/>
            <person name="Ji Z."/>
            <person name="Zhao W."/>
            <person name="Sun Y."/>
            <person name="Zhang Z."/>
            <person name="Bao J."/>
            <person name="Han Y."/>
            <person name="Dong L."/>
            <person name="Ji J."/>
            <person name="Chen P."/>
            <person name="Wu S."/>
            <person name="Liu J."/>
            <person name="Xiao Y."/>
            <person name="Bu D."/>
            <person name="Tan J."/>
            <person name="Yang L."/>
            <person name="Ye C."/>
            <person name="Zhang J."/>
            <person name="Xu J."/>
            <person name="Zhou Y."/>
            <person name="Yu Y."/>
            <person name="Zhang B."/>
            <person name="Zhuang S."/>
            <person name="Wei H."/>
            <person name="Liu B."/>
            <person name="Lei M."/>
            <person name="Yu H."/>
            <person name="Li Y."/>
            <person name="Xu H."/>
            <person name="Wei S."/>
            <person name="He X."/>
            <person name="Fang L."/>
            <person name="Zhang Z."/>
            <person name="Zhang Y."/>
            <person name="Huang X."/>
            <person name="Su Z."/>
            <person name="Tong W."/>
            <person name="Li J."/>
            <person name="Tong Z."/>
            <person name="Li S."/>
            <person name="Ye J."/>
            <person name="Wang L."/>
            <person name="Fang L."/>
            <person name="Lei T."/>
            <person name="Chen C.-S."/>
            <person name="Chen H.-C."/>
            <person name="Xu Z."/>
            <person name="Li H."/>
            <person name="Huang H."/>
            <person name="Zhang F."/>
            <person name="Xu H."/>
            <person name="Li N."/>
            <person name="Zhao C."/>
            <person name="Li S."/>
            <person name="Dong L."/>
            <person name="Huang Y."/>
            <person name="Li L."/>
            <person name="Xi Y."/>
            <person name="Qi Q."/>
            <person name="Li W."/>
            <person name="Zhang B."/>
            <person name="Hu W."/>
            <person name="Zhang Y."/>
            <person name="Tian X."/>
            <person name="Jiao Y."/>
            <person name="Liang X."/>
            <person name="Jin J."/>
            <person name="Gao L."/>
            <person name="Zheng W."/>
            <person name="Hao B."/>
            <person name="Liu S.-M."/>
            <person name="Wang W."/>
            <person name="Yuan L."/>
            <person name="Cao M."/>
            <person name="McDermott J."/>
            <person name="Samudrala R."/>
            <person name="Wang J."/>
            <person name="Wong G.K.-S."/>
            <person name="Yang H."/>
        </authorList>
    </citation>
    <scope>NUCLEOTIDE SEQUENCE [LARGE SCALE GENOMIC DNA]</scope>
    <source>
        <strain>cv. Nipponbare</strain>
    </source>
</reference>
<reference key="7">
    <citation type="journal article" date="2003" name="Science">
        <title>Collection, mapping, and annotation of over 28,000 cDNA clones from japonica rice.</title>
        <authorList>
            <consortium name="The rice full-length cDNA consortium"/>
        </authorList>
    </citation>
    <scope>NUCLEOTIDE SEQUENCE [LARGE SCALE MRNA]</scope>
    <source>
        <strain>cv. Nipponbare</strain>
    </source>
</reference>
<name>RK27_ORYSJ</name>